<proteinExistence type="evidence at protein level"/>
<organism>
    <name type="scientific">Arabidopsis thaliana</name>
    <name type="common">Mouse-ear cress</name>
    <dbReference type="NCBI Taxonomy" id="3702"/>
    <lineage>
        <taxon>Eukaryota</taxon>
        <taxon>Viridiplantae</taxon>
        <taxon>Streptophyta</taxon>
        <taxon>Embryophyta</taxon>
        <taxon>Tracheophyta</taxon>
        <taxon>Spermatophyta</taxon>
        <taxon>Magnoliopsida</taxon>
        <taxon>eudicotyledons</taxon>
        <taxon>Gunneridae</taxon>
        <taxon>Pentapetalae</taxon>
        <taxon>rosids</taxon>
        <taxon>malvids</taxon>
        <taxon>Brassicales</taxon>
        <taxon>Brassicaceae</taxon>
        <taxon>Camelineae</taxon>
        <taxon>Arabidopsis</taxon>
    </lineage>
</organism>
<gene>
    <name type="primary">THY-1</name>
    <name type="ordered locus">At2g16370</name>
    <name type="ORF">F16F14.13</name>
</gene>
<accession>Q05762</accession>
<accession>Q9SIW4</accession>
<protein>
    <recommendedName>
        <fullName>Bifunctional dihydrofolate reductase-thymidylate synthase 1</fullName>
        <shortName>DHFR-TS 1</shortName>
    </recommendedName>
    <domain>
        <recommendedName>
            <fullName>Dihydrofolate reductase</fullName>
            <ecNumber>1.5.1.3</ecNumber>
        </recommendedName>
    </domain>
    <domain>
        <recommendedName>
            <fullName>Thymidylate synthase</fullName>
            <ecNumber>2.1.1.45</ecNumber>
        </recommendedName>
    </domain>
</protein>
<reference key="1">
    <citation type="journal article" date="1993" name="Plant J.">
        <title>The origin of the bifunctional dihydrofolate reductase-thymidylate synthase isogenes of Arabidopsis thaliana.</title>
        <authorList>
            <person name="Lazar G."/>
            <person name="Zhang H."/>
            <person name="Goodman H.M."/>
        </authorList>
    </citation>
    <scope>NUCLEOTIDE SEQUENCE [MRNA]</scope>
    <source>
        <strain>cv. Landsberg erecta</strain>
    </source>
</reference>
<reference key="2">
    <citation type="journal article" date="1999" name="Nature">
        <title>Sequence and analysis of chromosome 2 of the plant Arabidopsis thaliana.</title>
        <authorList>
            <person name="Lin X."/>
            <person name="Kaul S."/>
            <person name="Rounsley S.D."/>
            <person name="Shea T.P."/>
            <person name="Benito M.-I."/>
            <person name="Town C.D."/>
            <person name="Fujii C.Y."/>
            <person name="Mason T.M."/>
            <person name="Bowman C.L."/>
            <person name="Barnstead M.E."/>
            <person name="Feldblyum T.V."/>
            <person name="Buell C.R."/>
            <person name="Ketchum K.A."/>
            <person name="Lee J.J."/>
            <person name="Ronning C.M."/>
            <person name="Koo H.L."/>
            <person name="Moffat K.S."/>
            <person name="Cronin L.A."/>
            <person name="Shen M."/>
            <person name="Pai G."/>
            <person name="Van Aken S."/>
            <person name="Umayam L."/>
            <person name="Tallon L.J."/>
            <person name="Gill J.E."/>
            <person name="Adams M.D."/>
            <person name="Carrera A.J."/>
            <person name="Creasy T.H."/>
            <person name="Goodman H.M."/>
            <person name="Somerville C.R."/>
            <person name="Copenhaver G.P."/>
            <person name="Preuss D."/>
            <person name="Nierman W.C."/>
            <person name="White O."/>
            <person name="Eisen J.A."/>
            <person name="Salzberg S.L."/>
            <person name="Fraser C.M."/>
            <person name="Venter J.C."/>
        </authorList>
    </citation>
    <scope>NUCLEOTIDE SEQUENCE [LARGE SCALE GENOMIC DNA]</scope>
    <source>
        <strain>cv. Columbia</strain>
    </source>
</reference>
<reference key="3">
    <citation type="journal article" date="2017" name="Plant J.">
        <title>Araport11: a complete reannotation of the Arabidopsis thaliana reference genome.</title>
        <authorList>
            <person name="Cheng C.Y."/>
            <person name="Krishnakumar V."/>
            <person name="Chan A.P."/>
            <person name="Thibaud-Nissen F."/>
            <person name="Schobel S."/>
            <person name="Town C.D."/>
        </authorList>
    </citation>
    <scope>GENOME REANNOTATION</scope>
    <source>
        <strain>cv. Columbia</strain>
    </source>
</reference>
<reference key="4">
    <citation type="journal article" date="2003" name="Science">
        <title>Empirical analysis of transcriptional activity in the Arabidopsis genome.</title>
        <authorList>
            <person name="Yamada K."/>
            <person name="Lim J."/>
            <person name="Dale J.M."/>
            <person name="Chen H."/>
            <person name="Shinn P."/>
            <person name="Palm C.J."/>
            <person name="Southwick A.M."/>
            <person name="Wu H.C."/>
            <person name="Kim C.J."/>
            <person name="Nguyen M."/>
            <person name="Pham P.K."/>
            <person name="Cheuk R.F."/>
            <person name="Karlin-Newmann G."/>
            <person name="Liu S.X."/>
            <person name="Lam B."/>
            <person name="Sakano H."/>
            <person name="Wu T."/>
            <person name="Yu G."/>
            <person name="Miranda M."/>
            <person name="Quach H.L."/>
            <person name="Tripp M."/>
            <person name="Chang C.H."/>
            <person name="Lee J.M."/>
            <person name="Toriumi M.J."/>
            <person name="Chan M.M."/>
            <person name="Tang C.C."/>
            <person name="Onodera C.S."/>
            <person name="Deng J.M."/>
            <person name="Akiyama K."/>
            <person name="Ansari Y."/>
            <person name="Arakawa T."/>
            <person name="Banh J."/>
            <person name="Banno F."/>
            <person name="Bowser L."/>
            <person name="Brooks S.Y."/>
            <person name="Carninci P."/>
            <person name="Chao Q."/>
            <person name="Choy N."/>
            <person name="Enju A."/>
            <person name="Goldsmith A.D."/>
            <person name="Gurjal M."/>
            <person name="Hansen N.F."/>
            <person name="Hayashizaki Y."/>
            <person name="Johnson-Hopson C."/>
            <person name="Hsuan V.W."/>
            <person name="Iida K."/>
            <person name="Karnes M."/>
            <person name="Khan S."/>
            <person name="Koesema E."/>
            <person name="Ishida J."/>
            <person name="Jiang P.X."/>
            <person name="Jones T."/>
            <person name="Kawai J."/>
            <person name="Kamiya A."/>
            <person name="Meyers C."/>
            <person name="Nakajima M."/>
            <person name="Narusaka M."/>
            <person name="Seki M."/>
            <person name="Sakurai T."/>
            <person name="Satou M."/>
            <person name="Tamse R."/>
            <person name="Vaysberg M."/>
            <person name="Wallender E.K."/>
            <person name="Wong C."/>
            <person name="Yamamura Y."/>
            <person name="Yuan S."/>
            <person name="Shinozaki K."/>
            <person name="Davis R.W."/>
            <person name="Theologis A."/>
            <person name="Ecker J.R."/>
        </authorList>
    </citation>
    <scope>NUCLEOTIDE SEQUENCE [LARGE SCALE MRNA]</scope>
    <source>
        <strain>cv. Columbia</strain>
    </source>
</reference>
<reference key="5">
    <citation type="journal article" date="2012" name="Mol. Cell. Proteomics">
        <title>Comparative large-scale characterisation of plant vs. mammal proteins reveals similar and idiosyncratic N-alpha acetylation features.</title>
        <authorList>
            <person name="Bienvenut W.V."/>
            <person name="Sumpton D."/>
            <person name="Martinez A."/>
            <person name="Lilla S."/>
            <person name="Espagne C."/>
            <person name="Meinnel T."/>
            <person name="Giglione C."/>
        </authorList>
    </citation>
    <scope>ACETYLATION [LARGE SCALE ANALYSIS] AT ALA-2</scope>
    <scope>CLEAVAGE OF INITIATOR METHIONINE [LARGE SCALE ANALYSIS]</scope>
    <scope>IDENTIFICATION BY MASS SPECTROMETRY [LARGE SCALE ANALYSIS]</scope>
</reference>
<name>DRTS1_ARATH</name>
<feature type="initiator methionine" description="Removed" evidence="3">
    <location>
        <position position="1"/>
    </location>
</feature>
<feature type="chain" id="PRO_0000186355" description="Bifunctional dihydrofolate reductase-thymidylate synthase 1">
    <location>
        <begin position="2"/>
        <end position="519"/>
    </location>
</feature>
<feature type="domain" description="DHFR">
    <location>
        <begin position="21"/>
        <end position="198"/>
    </location>
</feature>
<feature type="region of interest" description="Hinge">
    <location>
        <begin position="201"/>
        <end position="234"/>
    </location>
</feature>
<feature type="region of interest" description="Thymidylate synthase">
    <location>
        <begin position="235"/>
        <end position="519"/>
    </location>
</feature>
<feature type="active site" evidence="1">
    <location>
        <position position="401"/>
    </location>
</feature>
<feature type="binding site" evidence="1">
    <location>
        <position position="25"/>
    </location>
    <ligand>
        <name>substrate</name>
    </ligand>
</feature>
<feature type="binding site" evidence="1">
    <location>
        <position position="27"/>
    </location>
    <ligand>
        <name>NADP(+)</name>
        <dbReference type="ChEBI" id="CHEBI:58349"/>
    </ligand>
</feature>
<feature type="binding site" evidence="1">
    <location>
        <begin position="33"/>
        <end position="39"/>
    </location>
    <ligand>
        <name>NADP(+)</name>
        <dbReference type="ChEBI" id="CHEBI:58349"/>
    </ligand>
</feature>
<feature type="binding site" evidence="1">
    <location>
        <position position="47"/>
    </location>
    <ligand>
        <name>substrate</name>
    </ligand>
</feature>
<feature type="binding site" evidence="1">
    <location>
        <begin position="71"/>
        <end position="73"/>
    </location>
    <ligand>
        <name>NADP(+)</name>
        <dbReference type="ChEBI" id="CHEBI:58349"/>
    </ligand>
</feature>
<feature type="binding site" evidence="1">
    <location>
        <begin position="92"/>
        <end position="95"/>
    </location>
    <ligand>
        <name>NADP(+)</name>
        <dbReference type="ChEBI" id="CHEBI:58349"/>
    </ligand>
</feature>
<feature type="binding site" evidence="1">
    <location>
        <position position="134"/>
    </location>
    <ligand>
        <name>substrate</name>
    </ligand>
</feature>
<feature type="binding site" evidence="1">
    <location>
        <begin position="135"/>
        <end position="142"/>
    </location>
    <ligand>
        <name>NADP(+)</name>
        <dbReference type="ChEBI" id="CHEBI:58349"/>
    </ligand>
</feature>
<feature type="binding site" evidence="1">
    <location>
        <position position="155"/>
    </location>
    <ligand>
        <name>substrate</name>
    </ligand>
</feature>
<feature type="binding site" evidence="1">
    <location>
        <position position="256"/>
    </location>
    <ligand>
        <name>dUMP</name>
        <dbReference type="ChEBI" id="CHEBI:246422"/>
    </ligand>
</feature>
<feature type="binding site" evidence="1">
    <location>
        <position position="402"/>
    </location>
    <ligand>
        <name>dUMP</name>
        <dbReference type="ChEBI" id="CHEBI:246422"/>
    </ligand>
</feature>
<feature type="binding site" evidence="1">
    <location>
        <begin position="420"/>
        <end position="424"/>
    </location>
    <ligand>
        <name>dUMP</name>
        <dbReference type="ChEBI" id="CHEBI:246422"/>
    </ligand>
</feature>
<feature type="binding site" evidence="1">
    <location>
        <position position="432"/>
    </location>
    <ligand>
        <name>dUMP</name>
        <dbReference type="ChEBI" id="CHEBI:246422"/>
    </ligand>
</feature>
<feature type="binding site" evidence="1">
    <location>
        <begin position="462"/>
        <end position="464"/>
    </location>
    <ligand>
        <name>dUMP</name>
        <dbReference type="ChEBI" id="CHEBI:246422"/>
    </ligand>
</feature>
<feature type="modified residue" description="N-acetylalanine" evidence="3">
    <location>
        <position position="2"/>
    </location>
</feature>
<feature type="sequence conflict" description="In Ref. 1; AAA32788." evidence="2" ref="1">
    <original>A</original>
    <variation>R</variation>
    <location>
        <position position="120"/>
    </location>
</feature>
<feature type="sequence conflict" description="In Ref. 1; AAA32788." evidence="2" ref="1">
    <original>L</original>
    <variation>P</variation>
    <location>
        <position position="478"/>
    </location>
</feature>
<feature type="sequence conflict" description="In Ref. 1; AAA32788." evidence="2" ref="1">
    <original>M</original>
    <variation>L</variation>
    <location>
        <position position="485"/>
    </location>
</feature>
<feature type="strand" evidence="4">
    <location>
        <begin position="22"/>
        <end position="29"/>
    </location>
</feature>
<feature type="strand" evidence="4">
    <location>
        <begin position="33"/>
        <end position="39"/>
    </location>
</feature>
<feature type="helix" evidence="4">
    <location>
        <begin position="45"/>
        <end position="56"/>
    </location>
</feature>
<feature type="strand" evidence="4">
    <location>
        <begin position="59"/>
        <end position="62"/>
    </location>
</feature>
<feature type="strand" evidence="4">
    <location>
        <begin position="64"/>
        <end position="70"/>
    </location>
</feature>
<feature type="helix" evidence="4">
    <location>
        <begin position="71"/>
        <end position="76"/>
    </location>
</feature>
<feature type="strand" evidence="4">
    <location>
        <begin position="87"/>
        <end position="92"/>
    </location>
</feature>
<feature type="strand" evidence="4">
    <location>
        <begin position="104"/>
        <end position="110"/>
    </location>
</feature>
<feature type="helix" evidence="4">
    <location>
        <begin position="112"/>
        <end position="119"/>
    </location>
</feature>
<feature type="helix" evidence="4">
    <location>
        <begin position="124"/>
        <end position="127"/>
    </location>
</feature>
<feature type="strand" evidence="4">
    <location>
        <begin position="128"/>
        <end position="133"/>
    </location>
</feature>
<feature type="helix" evidence="4">
    <location>
        <begin position="137"/>
        <end position="143"/>
    </location>
</feature>
<feature type="strand" evidence="4">
    <location>
        <begin position="149"/>
        <end position="158"/>
    </location>
</feature>
<feature type="strand" evidence="4">
    <location>
        <begin position="164"/>
        <end position="166"/>
    </location>
</feature>
<feature type="turn" evidence="4">
    <location>
        <begin position="172"/>
        <end position="174"/>
    </location>
</feature>
<feature type="strand" evidence="4">
    <location>
        <begin position="175"/>
        <end position="180"/>
    </location>
</feature>
<feature type="strand" evidence="4">
    <location>
        <begin position="184"/>
        <end position="186"/>
    </location>
</feature>
<feature type="strand" evidence="4">
    <location>
        <begin position="189"/>
        <end position="198"/>
    </location>
</feature>
<feature type="helix" evidence="4">
    <location>
        <begin position="228"/>
        <end position="231"/>
    </location>
</feature>
<feature type="helix" evidence="4">
    <location>
        <begin position="236"/>
        <end position="249"/>
    </location>
</feature>
<feature type="strand" evidence="4">
    <location>
        <begin position="251"/>
        <end position="254"/>
    </location>
</feature>
<feature type="strand" evidence="4">
    <location>
        <begin position="260"/>
        <end position="272"/>
    </location>
</feature>
<feature type="strand" evidence="4">
    <location>
        <begin position="274"/>
        <end position="276"/>
    </location>
</feature>
<feature type="strand" evidence="4">
    <location>
        <begin position="281"/>
        <end position="283"/>
    </location>
</feature>
<feature type="helix" evidence="4">
    <location>
        <begin position="287"/>
        <end position="299"/>
    </location>
</feature>
<feature type="helix" evidence="4">
    <location>
        <begin position="305"/>
        <end position="308"/>
    </location>
</feature>
<feature type="turn" evidence="4">
    <location>
        <begin position="309"/>
        <end position="311"/>
    </location>
</feature>
<feature type="helix" evidence="4">
    <location>
        <begin position="316"/>
        <end position="318"/>
    </location>
</feature>
<feature type="helix" evidence="4">
    <location>
        <begin position="321"/>
        <end position="326"/>
    </location>
</feature>
<feature type="helix" evidence="4">
    <location>
        <begin position="341"/>
        <end position="347"/>
    </location>
</feature>
<feature type="helix" evidence="4">
    <location>
        <begin position="366"/>
        <end position="376"/>
    </location>
</feature>
<feature type="strand" evidence="4">
    <location>
        <begin position="384"/>
        <end position="386"/>
    </location>
</feature>
<feature type="helix" evidence="4">
    <location>
        <begin position="390"/>
        <end position="395"/>
    </location>
</feature>
<feature type="strand" evidence="4">
    <location>
        <begin position="401"/>
        <end position="410"/>
    </location>
</feature>
<feature type="strand" evidence="4">
    <location>
        <begin position="413"/>
        <end position="424"/>
    </location>
</feature>
<feature type="turn" evidence="4">
    <location>
        <begin position="425"/>
        <end position="427"/>
    </location>
</feature>
<feature type="helix" evidence="4">
    <location>
        <begin position="428"/>
        <end position="446"/>
    </location>
</feature>
<feature type="strand" evidence="4">
    <location>
        <begin position="450"/>
        <end position="464"/>
    </location>
</feature>
<feature type="helix" evidence="4">
    <location>
        <begin position="465"/>
        <end position="467"/>
    </location>
</feature>
<feature type="helix" evidence="4">
    <location>
        <begin position="468"/>
        <end position="474"/>
    </location>
</feature>
<feature type="strand" evidence="4">
    <location>
        <begin position="484"/>
        <end position="487"/>
    </location>
</feature>
<feature type="helix" evidence="4">
    <location>
        <begin position="494"/>
        <end position="496"/>
    </location>
</feature>
<feature type="helix" evidence="4">
    <location>
        <begin position="499"/>
        <end position="501"/>
    </location>
</feature>
<feature type="strand" evidence="4">
    <location>
        <begin position="502"/>
        <end position="506"/>
    </location>
</feature>
<sequence>MATTTLNDSVTTTLASEPQRTYQVVVAATKEMGIGKDGKLPWNLPTDLKFFKDITLTTSDSSKKNAVVMGRKTWESIPIKYRPLSGRLNVVLTRSGGFDIANTENVVTCSSVDSALDLLAAPPYCLSIERVFVIGGGDILREALNRPSCDAIHLTEIDTSVDCDTFIPAIDTSVYQPWSSSFPVTENGLRFCFTTFVRVKSSADESSDESNGSQSLQFDGKKFLFLPKMVFDQHEEFLYLNMVEDIISNGNVKNDRTGTGTLSKFGCQMKFNLRRSFPLLTTKRVFWRGVVEELLWFISGSTNAKVLQEKGIHIWDGNASREYLDGIGLTEREEGDLGPVYGFQWRHFGAKYTDMHADYTGQGFDQLVDVIDKIKNNPDDRRIIMSAWNPSDLKLMALPPCHMFAQFYVAEGELSCQMYQRSADMGLGVPFNIASYSLLTCMLAHVCDLVPGDFIHVLGDAHVYKTHVRPLQEQLLNLPKPFPVMKINPEKKQIDSFVASDFDLTGYDPHKKIEMKMAV</sequence>
<comment type="function">
    <text>Bifunctional enzyme. Involved in de novo dTMP biosynthesis. Key enzyme in folate metabolism. Can play two different roles depending on the source of dihydrofolate: de novo synthesis of tetrahydrofolate or recycling of the dihydrofolate released as one of the end products of the TS catalyzed reaction. Catalyzes an essential reaction for de novo glycine and purine synthesis, DNA precursor synthesis, and for the conversion of dUMP to dTMP.</text>
</comment>
<comment type="catalytic activity">
    <reaction>
        <text>(6S)-5,6,7,8-tetrahydrofolate + NADP(+) = 7,8-dihydrofolate + NADPH + H(+)</text>
        <dbReference type="Rhea" id="RHEA:15009"/>
        <dbReference type="ChEBI" id="CHEBI:15378"/>
        <dbReference type="ChEBI" id="CHEBI:57451"/>
        <dbReference type="ChEBI" id="CHEBI:57453"/>
        <dbReference type="ChEBI" id="CHEBI:57783"/>
        <dbReference type="ChEBI" id="CHEBI:58349"/>
        <dbReference type="EC" id="1.5.1.3"/>
    </reaction>
</comment>
<comment type="catalytic activity">
    <reaction>
        <text>dUMP + (6R)-5,10-methylene-5,6,7,8-tetrahydrofolate = 7,8-dihydrofolate + dTMP</text>
        <dbReference type="Rhea" id="RHEA:12104"/>
        <dbReference type="ChEBI" id="CHEBI:15636"/>
        <dbReference type="ChEBI" id="CHEBI:57451"/>
        <dbReference type="ChEBI" id="CHEBI:63528"/>
        <dbReference type="ChEBI" id="CHEBI:246422"/>
        <dbReference type="EC" id="2.1.1.45"/>
    </reaction>
</comment>
<comment type="pathway">
    <text>Cofactor biosynthesis; tetrahydrofolate biosynthesis; 5,6,7,8-tetrahydrofolate from 7,8-dihydrofolate: step 1/1.</text>
</comment>
<comment type="subunit">
    <text evidence="1">Heterodimer or homodimer.</text>
</comment>
<comment type="interaction">
    <interactant intactId="EBI-4455031">
        <id>Q05762</id>
    </interactant>
    <interactant intactId="EBI-4453099">
        <id>Q9LV27</id>
        <label>LST8-1</label>
    </interactant>
    <organismsDiffer>false</organismsDiffer>
    <experiments>10</experiments>
</comment>
<comment type="similarity">
    <text evidence="2">In the N-terminal section; belongs to the dihydrofolate reductase family.</text>
</comment>
<comment type="similarity">
    <text evidence="2">In the C-terminal section; belongs to the thymidylate synthase family.</text>
</comment>
<evidence type="ECO:0000250" key="1"/>
<evidence type="ECO:0000305" key="2"/>
<evidence type="ECO:0007744" key="3">
    <source>
    </source>
</evidence>
<evidence type="ECO:0007829" key="4">
    <source>
        <dbReference type="PDB" id="8DAE"/>
    </source>
</evidence>
<dbReference type="EC" id="1.5.1.3"/>
<dbReference type="EC" id="2.1.1.45"/>
<dbReference type="EMBL" id="L08593">
    <property type="protein sequence ID" value="AAA32788.1"/>
    <property type="molecule type" value="mRNA"/>
</dbReference>
<dbReference type="EMBL" id="AC007047">
    <property type="protein sequence ID" value="AAD22302.1"/>
    <property type="molecule type" value="Genomic_DNA"/>
</dbReference>
<dbReference type="EMBL" id="CP002685">
    <property type="protein sequence ID" value="AEC06489.1"/>
    <property type="molecule type" value="Genomic_DNA"/>
</dbReference>
<dbReference type="EMBL" id="CP002685">
    <property type="protein sequence ID" value="ANM62435.1"/>
    <property type="molecule type" value="Genomic_DNA"/>
</dbReference>
<dbReference type="EMBL" id="AY063968">
    <property type="protein sequence ID" value="AAL36324.1"/>
    <property type="molecule type" value="mRNA"/>
</dbReference>
<dbReference type="EMBL" id="AY114032">
    <property type="protein sequence ID" value="AAM45080.1"/>
    <property type="molecule type" value="mRNA"/>
</dbReference>
<dbReference type="PIR" id="E84539">
    <property type="entry name" value="E84539"/>
</dbReference>
<dbReference type="RefSeq" id="NP_001324593.1">
    <property type="nucleotide sequence ID" value="NM_001335473.1"/>
</dbReference>
<dbReference type="RefSeq" id="NP_179230.1">
    <property type="nucleotide sequence ID" value="NM_127191.4"/>
</dbReference>
<dbReference type="PDB" id="8DAE">
    <property type="method" value="X-ray"/>
    <property type="resolution" value="2.00 A"/>
    <property type="chains" value="A=2-519"/>
</dbReference>
<dbReference type="PDBsum" id="8DAE"/>
<dbReference type="SMR" id="Q05762"/>
<dbReference type="BioGRID" id="1492">
    <property type="interactions" value="3"/>
</dbReference>
<dbReference type="FunCoup" id="Q05762">
    <property type="interactions" value="2828"/>
</dbReference>
<dbReference type="IntAct" id="Q05762">
    <property type="interactions" value="2"/>
</dbReference>
<dbReference type="STRING" id="3702.Q05762"/>
<dbReference type="iPTMnet" id="Q05762"/>
<dbReference type="MetOSite" id="Q05762"/>
<dbReference type="PaxDb" id="3702-AT2G16370.1"/>
<dbReference type="ProteomicsDB" id="224371"/>
<dbReference type="EnsemblPlants" id="AT2G16370.1">
    <property type="protein sequence ID" value="AT2G16370.1"/>
    <property type="gene ID" value="AT2G16370"/>
</dbReference>
<dbReference type="EnsemblPlants" id="AT2G16370.3">
    <property type="protein sequence ID" value="AT2G16370.3"/>
    <property type="gene ID" value="AT2G16370"/>
</dbReference>
<dbReference type="GeneID" id="816134"/>
<dbReference type="Gramene" id="AT2G16370.1">
    <property type="protein sequence ID" value="AT2G16370.1"/>
    <property type="gene ID" value="AT2G16370"/>
</dbReference>
<dbReference type="Gramene" id="AT2G16370.3">
    <property type="protein sequence ID" value="AT2G16370.3"/>
    <property type="gene ID" value="AT2G16370"/>
</dbReference>
<dbReference type="KEGG" id="ath:AT2G16370"/>
<dbReference type="Araport" id="AT2G16370"/>
<dbReference type="TAIR" id="AT2G16370">
    <property type="gene designation" value="DHFR-TS-1"/>
</dbReference>
<dbReference type="eggNOG" id="KOG0673">
    <property type="taxonomic scope" value="Eukaryota"/>
</dbReference>
<dbReference type="eggNOG" id="KOG1324">
    <property type="taxonomic scope" value="Eukaryota"/>
</dbReference>
<dbReference type="HOGENOM" id="CLU_021669_2_2_1"/>
<dbReference type="InParanoid" id="Q05762"/>
<dbReference type="OMA" id="ILCAWNV"/>
<dbReference type="PhylomeDB" id="Q05762"/>
<dbReference type="BioCyc" id="ARA:AT2G16370-MONOMER"/>
<dbReference type="UniPathway" id="UPA00077">
    <property type="reaction ID" value="UER00158"/>
</dbReference>
<dbReference type="PRO" id="PR:Q05762"/>
<dbReference type="Proteomes" id="UP000006548">
    <property type="component" value="Chromosome 2"/>
</dbReference>
<dbReference type="ExpressionAtlas" id="Q05762">
    <property type="expression patterns" value="baseline and differential"/>
</dbReference>
<dbReference type="GO" id="GO:0005737">
    <property type="term" value="C:cytoplasm"/>
    <property type="evidence" value="ECO:0000314"/>
    <property type="project" value="TAIR"/>
</dbReference>
<dbReference type="GO" id="GO:0004146">
    <property type="term" value="F:dihydrofolate reductase activity"/>
    <property type="evidence" value="ECO:0000314"/>
    <property type="project" value="TAIR"/>
</dbReference>
<dbReference type="GO" id="GO:0004799">
    <property type="term" value="F:thymidylate synthase activity"/>
    <property type="evidence" value="ECO:0000250"/>
    <property type="project" value="TAIR"/>
</dbReference>
<dbReference type="GO" id="GO:0009257">
    <property type="term" value="P:10-formyltetrahydrofolate biosynthetic process"/>
    <property type="evidence" value="ECO:0000250"/>
    <property type="project" value="TAIR"/>
</dbReference>
<dbReference type="GO" id="GO:0006231">
    <property type="term" value="P:dTMP biosynthetic process"/>
    <property type="evidence" value="ECO:0007669"/>
    <property type="project" value="InterPro"/>
</dbReference>
<dbReference type="GO" id="GO:0032259">
    <property type="term" value="P:methylation"/>
    <property type="evidence" value="ECO:0007669"/>
    <property type="project" value="UniProtKB-KW"/>
</dbReference>
<dbReference type="GO" id="GO:0006730">
    <property type="term" value="P:one-carbon metabolic process"/>
    <property type="evidence" value="ECO:0007669"/>
    <property type="project" value="UniProtKB-KW"/>
</dbReference>
<dbReference type="CDD" id="cd00209">
    <property type="entry name" value="DHFR"/>
    <property type="match status" value="1"/>
</dbReference>
<dbReference type="CDD" id="cd00351">
    <property type="entry name" value="TS_Pyrimidine_HMase"/>
    <property type="match status" value="1"/>
</dbReference>
<dbReference type="FunFam" id="3.40.430.10:FF:000003">
    <property type="entry name" value="Bifunctional dihydrofolate reductase-thymidylate synthase"/>
    <property type="match status" value="1"/>
</dbReference>
<dbReference type="FunFam" id="3.30.572.10:FF:000002">
    <property type="entry name" value="Possible thymidylate synthase"/>
    <property type="match status" value="1"/>
</dbReference>
<dbReference type="Gene3D" id="3.40.430.10">
    <property type="entry name" value="Dihydrofolate Reductase, subunit A"/>
    <property type="match status" value="1"/>
</dbReference>
<dbReference type="Gene3D" id="3.30.572.10">
    <property type="entry name" value="Thymidylate synthase/dCMP hydroxymethylase domain"/>
    <property type="match status" value="1"/>
</dbReference>
<dbReference type="HAMAP" id="MF_00008">
    <property type="entry name" value="Thymidy_synth_bact"/>
    <property type="match status" value="1"/>
</dbReference>
<dbReference type="InterPro" id="IPR024072">
    <property type="entry name" value="DHFR-like_dom_sf"/>
</dbReference>
<dbReference type="InterPro" id="IPR012262">
    <property type="entry name" value="DHFR-TS"/>
</dbReference>
<dbReference type="InterPro" id="IPR017925">
    <property type="entry name" value="DHFR_CS"/>
</dbReference>
<dbReference type="InterPro" id="IPR001796">
    <property type="entry name" value="DHFR_dom"/>
</dbReference>
<dbReference type="InterPro" id="IPR045097">
    <property type="entry name" value="Thymidate_synth/dCMP_Mease"/>
</dbReference>
<dbReference type="InterPro" id="IPR023451">
    <property type="entry name" value="Thymidate_synth/dCMP_Mease_dom"/>
</dbReference>
<dbReference type="InterPro" id="IPR036926">
    <property type="entry name" value="Thymidate_synth/dCMP_Mease_sf"/>
</dbReference>
<dbReference type="InterPro" id="IPR000398">
    <property type="entry name" value="Thymidylate_synthase"/>
</dbReference>
<dbReference type="InterPro" id="IPR020940">
    <property type="entry name" value="Thymidylate_synthase_AS"/>
</dbReference>
<dbReference type="NCBIfam" id="NF002497">
    <property type="entry name" value="PRK01827.1-3"/>
    <property type="match status" value="1"/>
</dbReference>
<dbReference type="NCBIfam" id="TIGR03284">
    <property type="entry name" value="thym_sym"/>
    <property type="match status" value="1"/>
</dbReference>
<dbReference type="PANTHER" id="PTHR11548:SF2">
    <property type="entry name" value="THYMIDYLATE SYNTHASE"/>
    <property type="match status" value="1"/>
</dbReference>
<dbReference type="PANTHER" id="PTHR11548">
    <property type="entry name" value="THYMIDYLATE SYNTHASE 1"/>
    <property type="match status" value="1"/>
</dbReference>
<dbReference type="Pfam" id="PF00186">
    <property type="entry name" value="DHFR_1"/>
    <property type="match status" value="1"/>
</dbReference>
<dbReference type="Pfam" id="PF00303">
    <property type="entry name" value="Thymidylat_synt"/>
    <property type="match status" value="1"/>
</dbReference>
<dbReference type="PIRSF" id="PIRSF000389">
    <property type="entry name" value="DHFR-TS"/>
    <property type="match status" value="1"/>
</dbReference>
<dbReference type="PRINTS" id="PR00108">
    <property type="entry name" value="THYMDSNTHASE"/>
</dbReference>
<dbReference type="SUPFAM" id="SSF53597">
    <property type="entry name" value="Dihydrofolate reductase-like"/>
    <property type="match status" value="1"/>
</dbReference>
<dbReference type="SUPFAM" id="SSF55831">
    <property type="entry name" value="Thymidylate synthase/dCMP hydroxymethylase"/>
    <property type="match status" value="1"/>
</dbReference>
<dbReference type="PROSITE" id="PS00075">
    <property type="entry name" value="DHFR_1"/>
    <property type="match status" value="1"/>
</dbReference>
<dbReference type="PROSITE" id="PS51330">
    <property type="entry name" value="DHFR_2"/>
    <property type="match status" value="1"/>
</dbReference>
<dbReference type="PROSITE" id="PS00091">
    <property type="entry name" value="THYMIDYLATE_SYNTHASE"/>
    <property type="match status" value="1"/>
</dbReference>
<keyword id="KW-0002">3D-structure</keyword>
<keyword id="KW-0007">Acetylation</keyword>
<keyword id="KW-0489">Methyltransferase</keyword>
<keyword id="KW-0511">Multifunctional enzyme</keyword>
<keyword id="KW-0521">NADP</keyword>
<keyword id="KW-0545">Nucleotide biosynthesis</keyword>
<keyword id="KW-0554">One-carbon metabolism</keyword>
<keyword id="KW-0560">Oxidoreductase</keyword>
<keyword id="KW-1185">Reference proteome</keyword>
<keyword id="KW-0808">Transferase</keyword>